<dbReference type="EMBL" id="CP001635">
    <property type="protein sequence ID" value="ACS21650.1"/>
    <property type="molecule type" value="Genomic_DNA"/>
</dbReference>
<dbReference type="SMR" id="C5CQ78"/>
<dbReference type="STRING" id="543728.Vapar_5048"/>
<dbReference type="KEGG" id="vap:Vapar_5048"/>
<dbReference type="eggNOG" id="COG0099">
    <property type="taxonomic scope" value="Bacteria"/>
</dbReference>
<dbReference type="HOGENOM" id="CLU_103849_1_2_4"/>
<dbReference type="OrthoDB" id="9803610at2"/>
<dbReference type="GO" id="GO:0005829">
    <property type="term" value="C:cytosol"/>
    <property type="evidence" value="ECO:0007669"/>
    <property type="project" value="TreeGrafter"/>
</dbReference>
<dbReference type="GO" id="GO:0015935">
    <property type="term" value="C:small ribosomal subunit"/>
    <property type="evidence" value="ECO:0007669"/>
    <property type="project" value="TreeGrafter"/>
</dbReference>
<dbReference type="GO" id="GO:0019843">
    <property type="term" value="F:rRNA binding"/>
    <property type="evidence" value="ECO:0007669"/>
    <property type="project" value="UniProtKB-UniRule"/>
</dbReference>
<dbReference type="GO" id="GO:0003735">
    <property type="term" value="F:structural constituent of ribosome"/>
    <property type="evidence" value="ECO:0007669"/>
    <property type="project" value="InterPro"/>
</dbReference>
<dbReference type="GO" id="GO:0000049">
    <property type="term" value="F:tRNA binding"/>
    <property type="evidence" value="ECO:0007669"/>
    <property type="project" value="UniProtKB-UniRule"/>
</dbReference>
<dbReference type="GO" id="GO:0006412">
    <property type="term" value="P:translation"/>
    <property type="evidence" value="ECO:0007669"/>
    <property type="project" value="UniProtKB-UniRule"/>
</dbReference>
<dbReference type="FunFam" id="1.10.8.50:FF:000001">
    <property type="entry name" value="30S ribosomal protein S13"/>
    <property type="match status" value="1"/>
</dbReference>
<dbReference type="FunFam" id="4.10.910.10:FF:000001">
    <property type="entry name" value="30S ribosomal protein S13"/>
    <property type="match status" value="1"/>
</dbReference>
<dbReference type="Gene3D" id="1.10.8.50">
    <property type="match status" value="1"/>
</dbReference>
<dbReference type="Gene3D" id="4.10.910.10">
    <property type="entry name" value="30s ribosomal protein s13, domain 2"/>
    <property type="match status" value="1"/>
</dbReference>
<dbReference type="HAMAP" id="MF_01315">
    <property type="entry name" value="Ribosomal_uS13"/>
    <property type="match status" value="1"/>
</dbReference>
<dbReference type="InterPro" id="IPR027437">
    <property type="entry name" value="Rbsml_uS13_C"/>
</dbReference>
<dbReference type="InterPro" id="IPR001892">
    <property type="entry name" value="Ribosomal_uS13"/>
</dbReference>
<dbReference type="InterPro" id="IPR010979">
    <property type="entry name" value="Ribosomal_uS13-like_H2TH"/>
</dbReference>
<dbReference type="InterPro" id="IPR019980">
    <property type="entry name" value="Ribosomal_uS13_bac-type"/>
</dbReference>
<dbReference type="InterPro" id="IPR018269">
    <property type="entry name" value="Ribosomal_uS13_CS"/>
</dbReference>
<dbReference type="NCBIfam" id="TIGR03631">
    <property type="entry name" value="uS13_bact"/>
    <property type="match status" value="1"/>
</dbReference>
<dbReference type="PANTHER" id="PTHR10871">
    <property type="entry name" value="30S RIBOSOMAL PROTEIN S13/40S RIBOSOMAL PROTEIN S18"/>
    <property type="match status" value="1"/>
</dbReference>
<dbReference type="PANTHER" id="PTHR10871:SF1">
    <property type="entry name" value="SMALL RIBOSOMAL SUBUNIT PROTEIN US13M"/>
    <property type="match status" value="1"/>
</dbReference>
<dbReference type="Pfam" id="PF00416">
    <property type="entry name" value="Ribosomal_S13"/>
    <property type="match status" value="2"/>
</dbReference>
<dbReference type="PIRSF" id="PIRSF002134">
    <property type="entry name" value="Ribosomal_S13"/>
    <property type="match status" value="1"/>
</dbReference>
<dbReference type="SUPFAM" id="SSF46946">
    <property type="entry name" value="S13-like H2TH domain"/>
    <property type="match status" value="1"/>
</dbReference>
<dbReference type="PROSITE" id="PS00646">
    <property type="entry name" value="RIBOSOMAL_S13_1"/>
    <property type="match status" value="1"/>
</dbReference>
<dbReference type="PROSITE" id="PS50159">
    <property type="entry name" value="RIBOSOMAL_S13_2"/>
    <property type="match status" value="1"/>
</dbReference>
<proteinExistence type="inferred from homology"/>
<feature type="chain" id="PRO_1000214410" description="Small ribosomal subunit protein uS13">
    <location>
        <begin position="1"/>
        <end position="121"/>
    </location>
</feature>
<feature type="region of interest" description="Disordered" evidence="2">
    <location>
        <begin position="93"/>
        <end position="121"/>
    </location>
</feature>
<comment type="function">
    <text evidence="1">Located at the top of the head of the 30S subunit, it contacts several helices of the 16S rRNA. In the 70S ribosome it contacts the 23S rRNA (bridge B1a) and protein L5 of the 50S subunit (bridge B1b), connecting the 2 subunits; these bridges are implicated in subunit movement. Contacts the tRNAs in the A and P-sites.</text>
</comment>
<comment type="subunit">
    <text evidence="1">Part of the 30S ribosomal subunit. Forms a loose heterodimer with protein S19. Forms two bridges to the 50S subunit in the 70S ribosome.</text>
</comment>
<comment type="similarity">
    <text evidence="1">Belongs to the universal ribosomal protein uS13 family.</text>
</comment>
<keyword id="KW-0687">Ribonucleoprotein</keyword>
<keyword id="KW-0689">Ribosomal protein</keyword>
<keyword id="KW-0694">RNA-binding</keyword>
<keyword id="KW-0699">rRNA-binding</keyword>
<keyword id="KW-0820">tRNA-binding</keyword>
<sequence>MARIAGINIPPHKHAEIGLTAIFGIGRTRARQICEASGIEYSKKIKDLTDADLEKIRDQIALFTIEGDLRRETTMNIKRLMDIGCYRGFRHRRGLPMRGQRTRTNARTRKGPRKAAQSLKK</sequence>
<organism>
    <name type="scientific">Variovorax paradoxus (strain S110)</name>
    <dbReference type="NCBI Taxonomy" id="543728"/>
    <lineage>
        <taxon>Bacteria</taxon>
        <taxon>Pseudomonadati</taxon>
        <taxon>Pseudomonadota</taxon>
        <taxon>Betaproteobacteria</taxon>
        <taxon>Burkholderiales</taxon>
        <taxon>Comamonadaceae</taxon>
        <taxon>Variovorax</taxon>
    </lineage>
</organism>
<protein>
    <recommendedName>
        <fullName evidence="1">Small ribosomal subunit protein uS13</fullName>
    </recommendedName>
    <alternativeName>
        <fullName evidence="3">30S ribosomal protein S13</fullName>
    </alternativeName>
</protein>
<evidence type="ECO:0000255" key="1">
    <source>
        <dbReference type="HAMAP-Rule" id="MF_01315"/>
    </source>
</evidence>
<evidence type="ECO:0000256" key="2">
    <source>
        <dbReference type="SAM" id="MobiDB-lite"/>
    </source>
</evidence>
<evidence type="ECO:0000305" key="3"/>
<reference key="1">
    <citation type="journal article" date="2011" name="J. Bacteriol.">
        <title>Complete genome sequence of the metabolically versatile plant growth-promoting endophyte, Variovorax paradoxus S110.</title>
        <authorList>
            <person name="Han J.I."/>
            <person name="Choi H.K."/>
            <person name="Lee S.W."/>
            <person name="Orwin P.M."/>
            <person name="Kim J."/>
            <person name="Laroe S.L."/>
            <person name="Kim T.G."/>
            <person name="O'Neil J."/>
            <person name="Leadbetter J.R."/>
            <person name="Lee S.Y."/>
            <person name="Hur C.G."/>
            <person name="Spain J.C."/>
            <person name="Ovchinnikova G."/>
            <person name="Goodwin L."/>
            <person name="Han C."/>
        </authorList>
    </citation>
    <scope>NUCLEOTIDE SEQUENCE [LARGE SCALE GENOMIC DNA]</scope>
    <source>
        <strain>S110</strain>
    </source>
</reference>
<gene>
    <name evidence="1" type="primary">rpsM</name>
    <name type="ordered locus">Vapar_5048</name>
</gene>
<accession>C5CQ78</accession>
<name>RS13_VARPS</name>